<gene>
    <name evidence="1" type="primary">rpsI</name>
    <name type="ordered locus">Ssed_0748</name>
</gene>
<organism>
    <name type="scientific">Shewanella sediminis (strain HAW-EB3)</name>
    <dbReference type="NCBI Taxonomy" id="425104"/>
    <lineage>
        <taxon>Bacteria</taxon>
        <taxon>Pseudomonadati</taxon>
        <taxon>Pseudomonadota</taxon>
        <taxon>Gammaproteobacteria</taxon>
        <taxon>Alteromonadales</taxon>
        <taxon>Shewanellaceae</taxon>
        <taxon>Shewanella</taxon>
    </lineage>
</organism>
<sequence length="130" mass="14537">MAATQYYGTGRRKTSTARVFAKVGTGNIVVNQLPLDQYFGRETSRMVVRQPLELVEMTDKLDIFVTVKGGGNTGQAGAIRHGITRALMELDESLRPSLRAAGFVTRDARKVERKKVGLRKARRKPQFSKR</sequence>
<name>RS9_SHESH</name>
<reference key="1">
    <citation type="submission" date="2007-08" db="EMBL/GenBank/DDBJ databases">
        <title>Complete sequence of Shewanella sediminis HAW-EB3.</title>
        <authorList>
            <consortium name="US DOE Joint Genome Institute"/>
            <person name="Copeland A."/>
            <person name="Lucas S."/>
            <person name="Lapidus A."/>
            <person name="Barry K."/>
            <person name="Glavina del Rio T."/>
            <person name="Dalin E."/>
            <person name="Tice H."/>
            <person name="Pitluck S."/>
            <person name="Chertkov O."/>
            <person name="Brettin T."/>
            <person name="Bruce D."/>
            <person name="Detter J.C."/>
            <person name="Han C."/>
            <person name="Schmutz J."/>
            <person name="Larimer F."/>
            <person name="Land M."/>
            <person name="Hauser L."/>
            <person name="Kyrpides N."/>
            <person name="Kim E."/>
            <person name="Zhao J.-S."/>
            <person name="Richardson P."/>
        </authorList>
    </citation>
    <scope>NUCLEOTIDE SEQUENCE [LARGE SCALE GENOMIC DNA]</scope>
    <source>
        <strain>HAW-EB3</strain>
    </source>
</reference>
<feature type="chain" id="PRO_1000081836" description="Small ribosomal subunit protein uS9">
    <location>
        <begin position="1"/>
        <end position="130"/>
    </location>
</feature>
<evidence type="ECO:0000255" key="1">
    <source>
        <dbReference type="HAMAP-Rule" id="MF_00532"/>
    </source>
</evidence>
<evidence type="ECO:0000305" key="2"/>
<proteinExistence type="inferred from homology"/>
<accession>A8FR86</accession>
<dbReference type="EMBL" id="CP000821">
    <property type="protein sequence ID" value="ABV35359.1"/>
    <property type="molecule type" value="Genomic_DNA"/>
</dbReference>
<dbReference type="RefSeq" id="WP_012141096.1">
    <property type="nucleotide sequence ID" value="NC_009831.1"/>
</dbReference>
<dbReference type="SMR" id="A8FR86"/>
<dbReference type="STRING" id="425104.Ssed_0748"/>
<dbReference type="KEGG" id="sse:Ssed_0748"/>
<dbReference type="eggNOG" id="COG0103">
    <property type="taxonomic scope" value="Bacteria"/>
</dbReference>
<dbReference type="HOGENOM" id="CLU_046483_2_1_6"/>
<dbReference type="OrthoDB" id="9803965at2"/>
<dbReference type="Proteomes" id="UP000002015">
    <property type="component" value="Chromosome"/>
</dbReference>
<dbReference type="GO" id="GO:0022627">
    <property type="term" value="C:cytosolic small ribosomal subunit"/>
    <property type="evidence" value="ECO:0007669"/>
    <property type="project" value="TreeGrafter"/>
</dbReference>
<dbReference type="GO" id="GO:0003723">
    <property type="term" value="F:RNA binding"/>
    <property type="evidence" value="ECO:0007669"/>
    <property type="project" value="TreeGrafter"/>
</dbReference>
<dbReference type="GO" id="GO:0003735">
    <property type="term" value="F:structural constituent of ribosome"/>
    <property type="evidence" value="ECO:0007669"/>
    <property type="project" value="InterPro"/>
</dbReference>
<dbReference type="GO" id="GO:0006412">
    <property type="term" value="P:translation"/>
    <property type="evidence" value="ECO:0007669"/>
    <property type="project" value="UniProtKB-UniRule"/>
</dbReference>
<dbReference type="FunFam" id="3.30.230.10:FF:000001">
    <property type="entry name" value="30S ribosomal protein S9"/>
    <property type="match status" value="1"/>
</dbReference>
<dbReference type="Gene3D" id="3.30.230.10">
    <property type="match status" value="1"/>
</dbReference>
<dbReference type="HAMAP" id="MF_00532_B">
    <property type="entry name" value="Ribosomal_uS9_B"/>
    <property type="match status" value="1"/>
</dbReference>
<dbReference type="InterPro" id="IPR020568">
    <property type="entry name" value="Ribosomal_Su5_D2-typ_SF"/>
</dbReference>
<dbReference type="InterPro" id="IPR000754">
    <property type="entry name" value="Ribosomal_uS9"/>
</dbReference>
<dbReference type="InterPro" id="IPR023035">
    <property type="entry name" value="Ribosomal_uS9_bac/plastid"/>
</dbReference>
<dbReference type="InterPro" id="IPR020574">
    <property type="entry name" value="Ribosomal_uS9_CS"/>
</dbReference>
<dbReference type="InterPro" id="IPR014721">
    <property type="entry name" value="Ribsml_uS5_D2-typ_fold_subgr"/>
</dbReference>
<dbReference type="NCBIfam" id="NF001099">
    <property type="entry name" value="PRK00132.1"/>
    <property type="match status" value="1"/>
</dbReference>
<dbReference type="PANTHER" id="PTHR21569">
    <property type="entry name" value="RIBOSOMAL PROTEIN S9"/>
    <property type="match status" value="1"/>
</dbReference>
<dbReference type="PANTHER" id="PTHR21569:SF1">
    <property type="entry name" value="SMALL RIBOSOMAL SUBUNIT PROTEIN US9M"/>
    <property type="match status" value="1"/>
</dbReference>
<dbReference type="Pfam" id="PF00380">
    <property type="entry name" value="Ribosomal_S9"/>
    <property type="match status" value="1"/>
</dbReference>
<dbReference type="SUPFAM" id="SSF54211">
    <property type="entry name" value="Ribosomal protein S5 domain 2-like"/>
    <property type="match status" value="1"/>
</dbReference>
<dbReference type="PROSITE" id="PS00360">
    <property type="entry name" value="RIBOSOMAL_S9"/>
    <property type="match status" value="1"/>
</dbReference>
<protein>
    <recommendedName>
        <fullName evidence="1">Small ribosomal subunit protein uS9</fullName>
    </recommendedName>
    <alternativeName>
        <fullName evidence="2">30S ribosomal protein S9</fullName>
    </alternativeName>
</protein>
<comment type="similarity">
    <text evidence="1">Belongs to the universal ribosomal protein uS9 family.</text>
</comment>
<keyword id="KW-1185">Reference proteome</keyword>
<keyword id="KW-0687">Ribonucleoprotein</keyword>
<keyword id="KW-0689">Ribosomal protein</keyword>